<evidence type="ECO:0000255" key="1">
    <source>
        <dbReference type="HAMAP-Rule" id="MF_00627"/>
    </source>
</evidence>
<gene>
    <name evidence="1" type="primary">tdh</name>
    <name type="ordered locus">FTL_1523</name>
</gene>
<sequence length="351" mass="38400">MKALAKLKKQPGIWMINDAPIPEYGYNDVLIKIKKTAICGTDLHIYNWDKWSQNTIPVPMITGHEFAGEVVAKGDGVTSVDIGDRVSGEGHLVCGQCRNCRAGKRHLCRKTIGIGVNVQGAFAEYLVMPAVNVFKIPDSISDDIASTFDPMGNAIHTALSFNLTGEDVLITGAGPIGLMAVKIARFCGARRIVITDINEYRLQMARDFGATVALNVAPFKNQDELVKQMRKVMSDIGMTEGFDVGLEMSGINSAISMMLDVMNHGGKLSLLGISAGDISVDWGAILFKGLTLKGIYGREMFETWYLMTSMLQAGMDMNPIITHRLHIDEFQKGFEIMKSGQCGKVILDWSS</sequence>
<organism>
    <name type="scientific">Francisella tularensis subsp. holarctica (strain LVS)</name>
    <dbReference type="NCBI Taxonomy" id="376619"/>
    <lineage>
        <taxon>Bacteria</taxon>
        <taxon>Pseudomonadati</taxon>
        <taxon>Pseudomonadota</taxon>
        <taxon>Gammaproteobacteria</taxon>
        <taxon>Thiotrichales</taxon>
        <taxon>Francisellaceae</taxon>
        <taxon>Francisella</taxon>
    </lineage>
</organism>
<name>TDH_FRATH</name>
<comment type="function">
    <text evidence="1">Catalyzes the NAD(+)-dependent oxidation of L-threonine to 2-amino-3-ketobutyrate.</text>
</comment>
<comment type="catalytic activity">
    <reaction evidence="1">
        <text>L-threonine + NAD(+) = (2S)-2-amino-3-oxobutanoate + NADH + H(+)</text>
        <dbReference type="Rhea" id="RHEA:13161"/>
        <dbReference type="ChEBI" id="CHEBI:15378"/>
        <dbReference type="ChEBI" id="CHEBI:57540"/>
        <dbReference type="ChEBI" id="CHEBI:57926"/>
        <dbReference type="ChEBI" id="CHEBI:57945"/>
        <dbReference type="ChEBI" id="CHEBI:78948"/>
        <dbReference type="EC" id="1.1.1.103"/>
    </reaction>
</comment>
<comment type="cofactor">
    <cofactor evidence="1">
        <name>Zn(2+)</name>
        <dbReference type="ChEBI" id="CHEBI:29105"/>
    </cofactor>
    <text evidence="1">Binds 2 Zn(2+) ions per subunit.</text>
</comment>
<comment type="pathway">
    <text evidence="1">Amino-acid degradation; L-threonine degradation via oxydo-reductase pathway; glycine from L-threonine: step 1/2.</text>
</comment>
<comment type="subunit">
    <text evidence="1">Homotetramer.</text>
</comment>
<comment type="subcellular location">
    <subcellularLocation>
        <location evidence="1">Cytoplasm</location>
    </subcellularLocation>
</comment>
<comment type="similarity">
    <text evidence="1">Belongs to the zinc-containing alcohol dehydrogenase family.</text>
</comment>
<feature type="chain" id="PRO_1000051638" description="L-threonine 3-dehydrogenase">
    <location>
        <begin position="1"/>
        <end position="351"/>
    </location>
</feature>
<feature type="active site" description="Charge relay system" evidence="1">
    <location>
        <position position="41"/>
    </location>
</feature>
<feature type="active site" description="Charge relay system" evidence="1">
    <location>
        <position position="44"/>
    </location>
</feature>
<feature type="binding site" evidence="1">
    <location>
        <position position="39"/>
    </location>
    <ligand>
        <name>Zn(2+)</name>
        <dbReference type="ChEBI" id="CHEBI:29105"/>
        <label>1</label>
        <note>catalytic</note>
    </ligand>
</feature>
<feature type="binding site" evidence="1">
    <location>
        <position position="64"/>
    </location>
    <ligand>
        <name>Zn(2+)</name>
        <dbReference type="ChEBI" id="CHEBI:29105"/>
        <label>1</label>
        <note>catalytic</note>
    </ligand>
</feature>
<feature type="binding site" evidence="1">
    <location>
        <position position="65"/>
    </location>
    <ligand>
        <name>Zn(2+)</name>
        <dbReference type="ChEBI" id="CHEBI:29105"/>
        <label>1</label>
        <note>catalytic</note>
    </ligand>
</feature>
<feature type="binding site" evidence="1">
    <location>
        <position position="94"/>
    </location>
    <ligand>
        <name>Zn(2+)</name>
        <dbReference type="ChEBI" id="CHEBI:29105"/>
        <label>2</label>
    </ligand>
</feature>
<feature type="binding site" evidence="1">
    <location>
        <position position="97"/>
    </location>
    <ligand>
        <name>Zn(2+)</name>
        <dbReference type="ChEBI" id="CHEBI:29105"/>
        <label>2</label>
    </ligand>
</feature>
<feature type="binding site" evidence="1">
    <location>
        <position position="100"/>
    </location>
    <ligand>
        <name>Zn(2+)</name>
        <dbReference type="ChEBI" id="CHEBI:29105"/>
        <label>2</label>
    </ligand>
</feature>
<feature type="binding site" evidence="1">
    <location>
        <position position="108"/>
    </location>
    <ligand>
        <name>Zn(2+)</name>
        <dbReference type="ChEBI" id="CHEBI:29105"/>
        <label>2</label>
    </ligand>
</feature>
<feature type="binding site" evidence="1">
    <location>
        <position position="176"/>
    </location>
    <ligand>
        <name>NAD(+)</name>
        <dbReference type="ChEBI" id="CHEBI:57540"/>
    </ligand>
</feature>
<feature type="binding site" evidence="1">
    <location>
        <position position="196"/>
    </location>
    <ligand>
        <name>NAD(+)</name>
        <dbReference type="ChEBI" id="CHEBI:57540"/>
    </ligand>
</feature>
<feature type="binding site" evidence="1">
    <location>
        <position position="201"/>
    </location>
    <ligand>
        <name>NAD(+)</name>
        <dbReference type="ChEBI" id="CHEBI:57540"/>
    </ligand>
</feature>
<feature type="binding site" evidence="1">
    <location>
        <begin position="271"/>
        <end position="273"/>
    </location>
    <ligand>
        <name>NAD(+)</name>
        <dbReference type="ChEBI" id="CHEBI:57540"/>
    </ligand>
</feature>
<feature type="binding site" evidence="1">
    <location>
        <begin position="295"/>
        <end position="296"/>
    </location>
    <ligand>
        <name>NAD(+)</name>
        <dbReference type="ChEBI" id="CHEBI:57540"/>
    </ligand>
</feature>
<feature type="site" description="Important for catalytic activity for the proton relay mechanism but does not participate directly in the coordination of zinc atom" evidence="1">
    <location>
        <position position="149"/>
    </location>
</feature>
<protein>
    <recommendedName>
        <fullName evidence="1">L-threonine 3-dehydrogenase</fullName>
        <shortName evidence="1">TDH</shortName>
        <ecNumber evidence="1">1.1.1.103</ecNumber>
    </recommendedName>
</protein>
<dbReference type="EC" id="1.1.1.103" evidence="1"/>
<dbReference type="EMBL" id="AM233362">
    <property type="protein sequence ID" value="CAJ79962.1"/>
    <property type="molecule type" value="Genomic_DNA"/>
</dbReference>
<dbReference type="RefSeq" id="WP_003016849.1">
    <property type="nucleotide sequence ID" value="NZ_CP009694.1"/>
</dbReference>
<dbReference type="SMR" id="Q2A282"/>
<dbReference type="KEGG" id="ftl:FTL_1523"/>
<dbReference type="UniPathway" id="UPA00046">
    <property type="reaction ID" value="UER00505"/>
</dbReference>
<dbReference type="Proteomes" id="UP000001944">
    <property type="component" value="Chromosome"/>
</dbReference>
<dbReference type="GO" id="GO:0005737">
    <property type="term" value="C:cytoplasm"/>
    <property type="evidence" value="ECO:0007669"/>
    <property type="project" value="UniProtKB-SubCell"/>
</dbReference>
<dbReference type="GO" id="GO:0008743">
    <property type="term" value="F:L-threonine 3-dehydrogenase activity"/>
    <property type="evidence" value="ECO:0007669"/>
    <property type="project" value="UniProtKB-UniRule"/>
</dbReference>
<dbReference type="GO" id="GO:0008270">
    <property type="term" value="F:zinc ion binding"/>
    <property type="evidence" value="ECO:0007669"/>
    <property type="project" value="UniProtKB-UniRule"/>
</dbReference>
<dbReference type="GO" id="GO:0019518">
    <property type="term" value="P:L-threonine catabolic process to glycine"/>
    <property type="evidence" value="ECO:0007669"/>
    <property type="project" value="UniProtKB-UniPathway"/>
</dbReference>
<dbReference type="Gene3D" id="3.90.180.10">
    <property type="entry name" value="Medium-chain alcohol dehydrogenases, catalytic domain"/>
    <property type="match status" value="1"/>
</dbReference>
<dbReference type="Gene3D" id="3.40.50.720">
    <property type="entry name" value="NAD(P)-binding Rossmann-like Domain"/>
    <property type="match status" value="1"/>
</dbReference>
<dbReference type="HAMAP" id="MF_00627">
    <property type="entry name" value="Thr_dehydrog"/>
    <property type="match status" value="1"/>
</dbReference>
<dbReference type="InterPro" id="IPR013149">
    <property type="entry name" value="ADH-like_C"/>
</dbReference>
<dbReference type="InterPro" id="IPR013154">
    <property type="entry name" value="ADH-like_N"/>
</dbReference>
<dbReference type="InterPro" id="IPR002328">
    <property type="entry name" value="ADH_Zn_CS"/>
</dbReference>
<dbReference type="InterPro" id="IPR011032">
    <property type="entry name" value="GroES-like_sf"/>
</dbReference>
<dbReference type="InterPro" id="IPR004627">
    <property type="entry name" value="L-Threonine_3-DHase"/>
</dbReference>
<dbReference type="InterPro" id="IPR036291">
    <property type="entry name" value="NAD(P)-bd_dom_sf"/>
</dbReference>
<dbReference type="InterPro" id="IPR050129">
    <property type="entry name" value="Zn_alcohol_dh"/>
</dbReference>
<dbReference type="NCBIfam" id="NF003808">
    <property type="entry name" value="PRK05396.1"/>
    <property type="match status" value="1"/>
</dbReference>
<dbReference type="NCBIfam" id="TIGR00692">
    <property type="entry name" value="tdh"/>
    <property type="match status" value="1"/>
</dbReference>
<dbReference type="PANTHER" id="PTHR43401">
    <property type="entry name" value="L-THREONINE 3-DEHYDROGENASE"/>
    <property type="match status" value="1"/>
</dbReference>
<dbReference type="PANTHER" id="PTHR43401:SF2">
    <property type="entry name" value="L-THREONINE 3-DEHYDROGENASE"/>
    <property type="match status" value="1"/>
</dbReference>
<dbReference type="Pfam" id="PF08240">
    <property type="entry name" value="ADH_N"/>
    <property type="match status" value="1"/>
</dbReference>
<dbReference type="Pfam" id="PF00107">
    <property type="entry name" value="ADH_zinc_N"/>
    <property type="match status" value="1"/>
</dbReference>
<dbReference type="SUPFAM" id="SSF50129">
    <property type="entry name" value="GroES-like"/>
    <property type="match status" value="1"/>
</dbReference>
<dbReference type="SUPFAM" id="SSF51735">
    <property type="entry name" value="NAD(P)-binding Rossmann-fold domains"/>
    <property type="match status" value="1"/>
</dbReference>
<dbReference type="PROSITE" id="PS00059">
    <property type="entry name" value="ADH_ZINC"/>
    <property type="match status" value="1"/>
</dbReference>
<reference key="1">
    <citation type="submission" date="2006-03" db="EMBL/GenBank/DDBJ databases">
        <title>Complete genome sequence of Francisella tularensis LVS (Live Vaccine Strain).</title>
        <authorList>
            <person name="Chain P."/>
            <person name="Larimer F."/>
            <person name="Land M."/>
            <person name="Stilwagen S."/>
            <person name="Larsson P."/>
            <person name="Bearden S."/>
            <person name="Chu M."/>
            <person name="Oyston P."/>
            <person name="Forsman M."/>
            <person name="Andersson S."/>
            <person name="Lindler L."/>
            <person name="Titball R."/>
            <person name="Garcia E."/>
        </authorList>
    </citation>
    <scope>NUCLEOTIDE SEQUENCE [LARGE SCALE GENOMIC DNA]</scope>
    <source>
        <strain>LVS</strain>
    </source>
</reference>
<accession>Q2A282</accession>
<proteinExistence type="inferred from homology"/>
<keyword id="KW-0963">Cytoplasm</keyword>
<keyword id="KW-0479">Metal-binding</keyword>
<keyword id="KW-0520">NAD</keyword>
<keyword id="KW-0560">Oxidoreductase</keyword>
<keyword id="KW-1185">Reference proteome</keyword>
<keyword id="KW-0862">Zinc</keyword>